<proteinExistence type="inferred from homology"/>
<feature type="chain" id="PRO_0000166543" description="Potassium-transporting ATPase potassium-binding subunit">
    <location>
        <begin position="1"/>
        <end position="585"/>
    </location>
</feature>
<feature type="transmembrane region" description="Helical" evidence="1">
    <location>
        <begin position="25"/>
        <end position="45"/>
    </location>
</feature>
<feature type="transmembrane region" description="Helical" evidence="1">
    <location>
        <begin position="84"/>
        <end position="104"/>
    </location>
</feature>
<feature type="transmembrane region" description="Helical" evidence="1">
    <location>
        <begin position="152"/>
        <end position="172"/>
    </location>
</feature>
<feature type="transmembrane region" description="Helical" evidence="1">
    <location>
        <begin position="194"/>
        <end position="214"/>
    </location>
</feature>
<feature type="transmembrane region" description="Helical" evidence="1">
    <location>
        <begin position="275"/>
        <end position="295"/>
    </location>
</feature>
<feature type="transmembrane region" description="Helical" evidence="1">
    <location>
        <begin position="307"/>
        <end position="327"/>
    </location>
</feature>
<feature type="transmembrane region" description="Helical" evidence="1">
    <location>
        <begin position="345"/>
        <end position="365"/>
    </location>
</feature>
<feature type="transmembrane region" description="Helical" evidence="1">
    <location>
        <begin position="368"/>
        <end position="388"/>
    </location>
</feature>
<feature type="transmembrane region" description="Helical" evidence="1">
    <location>
        <begin position="397"/>
        <end position="417"/>
    </location>
</feature>
<feature type="transmembrane region" description="Helical" evidence="1">
    <location>
        <begin position="437"/>
        <end position="457"/>
    </location>
</feature>
<feature type="transmembrane region" description="Helical" evidence="1">
    <location>
        <begin position="502"/>
        <end position="522"/>
    </location>
</feature>
<feature type="transmembrane region" description="Helical" evidence="1">
    <location>
        <begin position="547"/>
        <end position="567"/>
    </location>
</feature>
<evidence type="ECO:0000255" key="1">
    <source>
        <dbReference type="HAMAP-Rule" id="MF_00275"/>
    </source>
</evidence>
<reference key="1">
    <citation type="journal article" date="2000" name="Proc. Natl. Acad. Sci. U.S.A.">
        <title>Archaeal adaptation to higher temperatures revealed by genomic sequence of Thermoplasma volcanium.</title>
        <authorList>
            <person name="Kawashima T."/>
            <person name="Amano N."/>
            <person name="Koike H."/>
            <person name="Makino S."/>
            <person name="Higuchi S."/>
            <person name="Kawashima-Ohya Y."/>
            <person name="Watanabe K."/>
            <person name="Yamazaki M."/>
            <person name="Kanehori K."/>
            <person name="Kawamoto T."/>
            <person name="Nunoshiba T."/>
            <person name="Yamamoto Y."/>
            <person name="Aramaki H."/>
            <person name="Makino K."/>
            <person name="Suzuki M."/>
        </authorList>
    </citation>
    <scope>NUCLEOTIDE SEQUENCE [LARGE SCALE GENOMIC DNA]</scope>
    <source>
        <strain>ATCC 51530 / DSM 4299 / JCM 9571 / NBRC 15438 / GSS1</strain>
    </source>
</reference>
<gene>
    <name evidence="1" type="primary">kdpA</name>
    <name type="ordered locus">TV0499</name>
    <name type="ORF">TVG0487282</name>
</gene>
<organism>
    <name type="scientific">Thermoplasma volcanium (strain ATCC 51530 / DSM 4299 / JCM 9571 / NBRC 15438 / GSS1)</name>
    <dbReference type="NCBI Taxonomy" id="273116"/>
    <lineage>
        <taxon>Archaea</taxon>
        <taxon>Methanobacteriati</taxon>
        <taxon>Thermoplasmatota</taxon>
        <taxon>Thermoplasmata</taxon>
        <taxon>Thermoplasmatales</taxon>
        <taxon>Thermoplasmataceae</taxon>
        <taxon>Thermoplasma</taxon>
    </lineage>
</organism>
<keyword id="KW-1003">Cell membrane</keyword>
<keyword id="KW-0406">Ion transport</keyword>
<keyword id="KW-0472">Membrane</keyword>
<keyword id="KW-0630">Potassium</keyword>
<keyword id="KW-0633">Potassium transport</keyword>
<keyword id="KW-0812">Transmembrane</keyword>
<keyword id="KW-1133">Transmembrane helix</keyword>
<keyword id="KW-0813">Transport</keyword>
<dbReference type="EMBL" id="BA000011">
    <property type="protein sequence ID" value="BAB59641.1"/>
    <property type="molecule type" value="Genomic_DNA"/>
</dbReference>
<dbReference type="RefSeq" id="WP_010916757.1">
    <property type="nucleotide sequence ID" value="NC_002689.2"/>
</dbReference>
<dbReference type="SMR" id="Q97BF7"/>
<dbReference type="STRING" id="273116.gene:9381282"/>
<dbReference type="PaxDb" id="273116-14324714"/>
<dbReference type="GeneID" id="1441015"/>
<dbReference type="KEGG" id="tvo:TVG0487282"/>
<dbReference type="eggNOG" id="arCOG04804">
    <property type="taxonomic scope" value="Archaea"/>
</dbReference>
<dbReference type="HOGENOM" id="CLU_018614_3_0_2"/>
<dbReference type="OrthoDB" id="56688at2157"/>
<dbReference type="PhylomeDB" id="Q97BF7"/>
<dbReference type="Proteomes" id="UP000001017">
    <property type="component" value="Chromosome"/>
</dbReference>
<dbReference type="GO" id="GO:0005886">
    <property type="term" value="C:plasma membrane"/>
    <property type="evidence" value="ECO:0007669"/>
    <property type="project" value="UniProtKB-SubCell"/>
</dbReference>
<dbReference type="GO" id="GO:0008556">
    <property type="term" value="F:P-type potassium transmembrane transporter activity"/>
    <property type="evidence" value="ECO:0007669"/>
    <property type="project" value="InterPro"/>
</dbReference>
<dbReference type="GO" id="GO:0030955">
    <property type="term" value="F:potassium ion binding"/>
    <property type="evidence" value="ECO:0007669"/>
    <property type="project" value="UniProtKB-UniRule"/>
</dbReference>
<dbReference type="HAMAP" id="MF_00275">
    <property type="entry name" value="KdpA"/>
    <property type="match status" value="1"/>
</dbReference>
<dbReference type="InterPro" id="IPR004623">
    <property type="entry name" value="KdpA"/>
</dbReference>
<dbReference type="NCBIfam" id="TIGR00680">
    <property type="entry name" value="kdpA"/>
    <property type="match status" value="1"/>
</dbReference>
<dbReference type="PANTHER" id="PTHR30607">
    <property type="entry name" value="POTASSIUM-TRANSPORTING ATPASE A CHAIN"/>
    <property type="match status" value="1"/>
</dbReference>
<dbReference type="PANTHER" id="PTHR30607:SF2">
    <property type="entry name" value="POTASSIUM-TRANSPORTING ATPASE POTASSIUM-BINDING SUBUNIT"/>
    <property type="match status" value="1"/>
</dbReference>
<dbReference type="Pfam" id="PF03814">
    <property type="entry name" value="KdpA"/>
    <property type="match status" value="1"/>
</dbReference>
<dbReference type="PIRSF" id="PIRSF001294">
    <property type="entry name" value="K_ATPaseA"/>
    <property type="match status" value="1"/>
</dbReference>
<comment type="function">
    <text evidence="1">Part of the high-affinity ATP-driven potassium transport (or Kdp) system, which catalyzes the hydrolysis of ATP coupled with the electrogenic transport of potassium into the cytoplasm. This subunit binds the extracellular potassium ions and delivers the ions to the membrane domain of KdpB through an intramembrane tunnel.</text>
</comment>
<comment type="subunit">
    <text evidence="1">The system is composed of three essential subunits: KdpA, KdpB and KdpC.</text>
</comment>
<comment type="subcellular location">
    <subcellularLocation>
        <location evidence="1">Cell membrane</location>
        <topology evidence="1">Multi-pass membrane protein</topology>
    </subcellularLocation>
</comment>
<comment type="similarity">
    <text evidence="1">Belongs to the KdpA family.</text>
</comment>
<protein>
    <recommendedName>
        <fullName evidence="1">Potassium-transporting ATPase potassium-binding subunit</fullName>
    </recommendedName>
    <alternativeName>
        <fullName evidence="1">ATP phosphohydrolase [potassium-transporting] A chain</fullName>
    </alternativeName>
    <alternativeName>
        <fullName evidence="1">Potassium-binding and translocating subunit A</fullName>
    </alternativeName>
    <alternativeName>
        <fullName evidence="1">Potassium-translocating ATPase A chain</fullName>
    </alternativeName>
</protein>
<name>KDPA_THEVO</name>
<accession>Q97BF7</accession>
<sequence>MIFPAEDVYFWSKFFATERAVSGVIIIFIYLGITSIFSYVLSFYIAKIYRDEPTFLRKLTGSVISFFEKIIGESENHQMEFKEYFINLLLFNFFAGLISFLVIMYQKYLPFSYYATGMSPSLDFNTVVSFLTNTNLQHYSNPFRLSYFSQTFVITGLMFLSAGTGFAASMAFVRGLRTDVGKIGNFYHDFLVSIFDLILPLSILVTIILILAGVPETIQRFISVTPFFTNNTVNIPLGPVATLEAIKNIGTNGGGFYGANAGFPFENPDWFTNLLEFVSFTIIPLGSLMALGIVFEDRKFGRMLYYVIMFFFVFDGLFAFFGEYVGVPFLHIGYYTGNMLGKETAIGVSQSSIFAVGATLTSTGASDGALVSYTPAGIIGVLIGLLLNDPLGGVGTGVLNIFMYIIFTVFIGSLMVGKLPELMSLRIGSKEIKYSTLSLVTHPLLVVIPLGITLMIPHLSSTFVNPNSSRITELLYEFASAASNNGSEMGGFLTNQPYFNYLDGVIMLLGRYLLMGFQLVIAQSFSIKKAKVQYLRSIDTSNSVFALLLISAMLIIGLLSYFPIIVLGPLLSWTHDFSLIVGAIL</sequence>